<evidence type="ECO:0000250" key="1">
    <source>
        <dbReference type="UniProtKB" id="P01762"/>
    </source>
</evidence>
<evidence type="ECO:0000250" key="2">
    <source>
        <dbReference type="UniProtKB" id="P23083"/>
    </source>
</evidence>
<evidence type="ECO:0000255" key="3"/>
<evidence type="ECO:0000255" key="4">
    <source>
        <dbReference type="PROSITE-ProRule" id="PRU00114"/>
    </source>
</evidence>
<evidence type="ECO:0000303" key="5">
    <source>
    </source>
</evidence>
<evidence type="ECO:0000303" key="6">
    <source>
    </source>
</evidence>
<evidence type="ECO:0000303" key="7">
    <source>
    </source>
</evidence>
<evidence type="ECO:0000303" key="8">
    <source>
    </source>
</evidence>
<evidence type="ECO:0000303" key="9">
    <source>
    </source>
</evidence>
<evidence type="ECO:0000303" key="10">
    <source ref="3"/>
</evidence>
<evidence type="ECO:0000305" key="11"/>
<evidence type="ECO:0000305" key="12">
    <source>
    </source>
</evidence>
<proteinExistence type="inferred from homology"/>
<dbReference type="EMBL" id="KC162925">
    <property type="protein sequence ID" value="AGE91700.1"/>
    <property type="molecule type" value="Genomic_DNA"/>
</dbReference>
<dbReference type="SMR" id="P0DP03"/>
<dbReference type="FunCoup" id="P0DP03">
    <property type="interactions" value="330"/>
</dbReference>
<dbReference type="IMGT_GENE-DB" id="IGHV3-30-5"/>
<dbReference type="BioMuta" id="HGNC:5594"/>
<dbReference type="jPOST" id="P0DP03"/>
<dbReference type="MassIVE" id="P0DP03"/>
<dbReference type="AGR" id="HGNC:5594"/>
<dbReference type="GeneCards" id="IGHV3-30-5"/>
<dbReference type="HGNC" id="HGNC:5594">
    <property type="gene designation" value="IGHV3-30-5"/>
</dbReference>
<dbReference type="HPA" id="ENSG00000270550">
    <property type="expression patterns" value="Tissue enhanced (intestine, lymphoid tissue, stomach)"/>
</dbReference>
<dbReference type="neXtProt" id="NX_P0DP03"/>
<dbReference type="OpenTargets" id="ENSG00000270550"/>
<dbReference type="VEuPathDB" id="HostDB:ENSG00000270550"/>
<dbReference type="GeneTree" id="ENSGT01050000244871"/>
<dbReference type="InParanoid" id="P0DP03"/>
<dbReference type="OMA" id="WVASIAT"/>
<dbReference type="OrthoDB" id="9945861at2759"/>
<dbReference type="PAN-GO" id="P0DP03">
    <property type="GO annotations" value="11 GO annotations based on evolutionary models"/>
</dbReference>
<dbReference type="Pharos" id="P0DP03">
    <property type="development level" value="Tdark"/>
</dbReference>
<dbReference type="PRO" id="PR:P0DP03"/>
<dbReference type="Proteomes" id="UP000005640">
    <property type="component" value="Unplaced"/>
</dbReference>
<dbReference type="RNAct" id="P0DP03">
    <property type="molecule type" value="protein"/>
</dbReference>
<dbReference type="ExpressionAtlas" id="P0DP03">
    <property type="expression patterns" value="baseline and differential"/>
</dbReference>
<dbReference type="GO" id="GO:0005576">
    <property type="term" value="C:extracellular region"/>
    <property type="evidence" value="ECO:0007669"/>
    <property type="project" value="UniProtKB-SubCell"/>
</dbReference>
<dbReference type="GO" id="GO:0019814">
    <property type="term" value="C:immunoglobulin complex"/>
    <property type="evidence" value="ECO:0007669"/>
    <property type="project" value="UniProtKB-KW"/>
</dbReference>
<dbReference type="GO" id="GO:0005886">
    <property type="term" value="C:plasma membrane"/>
    <property type="evidence" value="ECO:0007669"/>
    <property type="project" value="UniProtKB-SubCell"/>
</dbReference>
<dbReference type="GO" id="GO:0003823">
    <property type="term" value="F:antigen binding"/>
    <property type="evidence" value="ECO:0000318"/>
    <property type="project" value="GO_Central"/>
</dbReference>
<dbReference type="GO" id="GO:0016064">
    <property type="term" value="P:immunoglobulin mediated immune response"/>
    <property type="evidence" value="ECO:0000318"/>
    <property type="project" value="GO_Central"/>
</dbReference>
<dbReference type="CDD" id="cd04981">
    <property type="entry name" value="IgV_H"/>
    <property type="match status" value="1"/>
</dbReference>
<dbReference type="FunFam" id="2.60.40.10:FF:000942">
    <property type="entry name" value="Immunoglobulin heavy variable 3-23"/>
    <property type="match status" value="1"/>
</dbReference>
<dbReference type="Gene3D" id="2.60.40.10">
    <property type="entry name" value="Immunoglobulins"/>
    <property type="match status" value="1"/>
</dbReference>
<dbReference type="InterPro" id="IPR007110">
    <property type="entry name" value="Ig-like_dom"/>
</dbReference>
<dbReference type="InterPro" id="IPR036179">
    <property type="entry name" value="Ig-like_dom_sf"/>
</dbReference>
<dbReference type="InterPro" id="IPR013783">
    <property type="entry name" value="Ig-like_fold"/>
</dbReference>
<dbReference type="InterPro" id="IPR013106">
    <property type="entry name" value="Ig_V-set"/>
</dbReference>
<dbReference type="InterPro" id="IPR050199">
    <property type="entry name" value="IgHV"/>
</dbReference>
<dbReference type="PANTHER" id="PTHR23266">
    <property type="entry name" value="IMMUNOGLOBULIN HEAVY CHAIN"/>
    <property type="match status" value="1"/>
</dbReference>
<dbReference type="Pfam" id="PF07686">
    <property type="entry name" value="V-set"/>
    <property type="match status" value="1"/>
</dbReference>
<dbReference type="SMART" id="SM00406">
    <property type="entry name" value="IGv"/>
    <property type="match status" value="1"/>
</dbReference>
<dbReference type="SUPFAM" id="SSF48726">
    <property type="entry name" value="Immunoglobulin"/>
    <property type="match status" value="1"/>
</dbReference>
<dbReference type="PROSITE" id="PS50835">
    <property type="entry name" value="IG_LIKE"/>
    <property type="match status" value="1"/>
</dbReference>
<accession>P0DP03</accession>
<protein>
    <recommendedName>
        <fullName evidence="5 10">Immunoglobulin heavy variable 3-30-5</fullName>
    </recommendedName>
</protein>
<reference key="1">
    <citation type="journal article" date="2013" name="Am. J. Hum. Genet.">
        <title>Complete haplotype sequence of the human immunoglobulin heavy-chain variable, diversity, and joining genes and characterization of allelic and copy-number variation.</title>
        <authorList>
            <person name="Watson C.T."/>
            <person name="Steinberg K.M."/>
            <person name="Huddleston J."/>
            <person name="Warren R.L."/>
            <person name="Malig M."/>
            <person name="Schein J."/>
            <person name="Willsey A.J."/>
            <person name="Joy J.B."/>
            <person name="Scott J.K."/>
            <person name="Graves T.A."/>
            <person name="Wilson R.K."/>
            <person name="Holt R.A."/>
            <person name="Eichler E.E."/>
            <person name="Breden F."/>
        </authorList>
    </citation>
    <scope>NUCLEOTIDE SEQUENCE [GENOMIC DNA] (IMGT ALLELE IGHV3-30-5*01)</scope>
</reference>
<reference key="2">
    <citation type="journal article" date="2001" name="Exp. Clin. Immunogenet.">
        <title>Nomenclature of the human immunoglobulin heavy (IGH) genes.</title>
        <authorList>
            <person name="Lefranc M.P."/>
        </authorList>
    </citation>
    <scope>NOMENCLATURE</scope>
</reference>
<reference key="3">
    <citation type="book" date="2001" name="The Immunoglobulin FactsBook.">
        <title>The Immunoglobulin FactsBook.</title>
        <editorList>
            <person name="Lefranc M.P."/>
            <person name="Lefranc G."/>
        </editorList>
        <authorList>
            <person name="Lefranc M.P."/>
            <person name="Lefranc G."/>
        </authorList>
    </citation>
    <scope>NOMENCLATURE</scope>
</reference>
<reference key="4">
    <citation type="journal article" date="2007" name="Annu. Rev. Genet.">
        <title>Immunoglobulin somatic hypermutation.</title>
        <authorList>
            <person name="Teng G."/>
            <person name="Papavasiliou F.N."/>
        </authorList>
    </citation>
    <scope>REVIEW ON SOMATIC HYPERMUTATION</scope>
</reference>
<reference key="5">
    <citation type="journal article" date="2010" name="J. Allergy Clin. Immunol.">
        <title>Structure and function of immunoglobulins.</title>
        <authorList>
            <person name="Schroeder H.W. Jr."/>
            <person name="Cavacini L."/>
        </authorList>
    </citation>
    <scope>REVIEW ON IMMUNOGLOBULINS</scope>
</reference>
<reference key="6">
    <citation type="journal article" date="2012" name="Nat. Rev. Immunol.">
        <title>Molecular programming of B cell memory.</title>
        <authorList>
            <person name="McHeyzer-Williams M."/>
            <person name="Okitsu S."/>
            <person name="Wang N."/>
            <person name="McHeyzer-Williams L."/>
        </authorList>
    </citation>
    <scope>REVIEW ON FUNCTION</scope>
</reference>
<reference key="7">
    <citation type="journal article" date="2014" name="Front. Immunol.">
        <title>Immunoglobulin and T Cell Receptor Genes: IMGT((R)) and the Birth and Rise of Immunoinformatics.</title>
        <authorList>
            <person name="Lefranc M.P."/>
        </authorList>
    </citation>
    <scope>NOMENCLATURE</scope>
</reference>
<feature type="signal peptide" evidence="3">
    <location>
        <begin position="1"/>
        <end position="19"/>
    </location>
</feature>
<feature type="chain" id="PRO_0000439564" description="Immunoglobulin heavy variable 3-30-5" evidence="3">
    <location>
        <begin position="20"/>
        <end position="117"/>
    </location>
</feature>
<feature type="domain" description="Ig-like" evidence="4">
    <location>
        <begin position="20"/>
        <end position="117" status="greater than"/>
    </location>
</feature>
<feature type="region of interest" description="Framework-1" evidence="2">
    <location>
        <begin position="20"/>
        <end position="44"/>
    </location>
</feature>
<feature type="region of interest" description="Complementarity-determining-1" evidence="2">
    <location>
        <begin position="45"/>
        <end position="52"/>
    </location>
</feature>
<feature type="region of interest" description="Framework-2" evidence="2">
    <location>
        <begin position="53"/>
        <end position="69"/>
    </location>
</feature>
<feature type="region of interest" description="Complementarity-determining-2" evidence="2">
    <location>
        <begin position="70"/>
        <end position="77"/>
    </location>
</feature>
<feature type="region of interest" description="Framework-3" evidence="2">
    <location>
        <begin position="78"/>
        <end position="115"/>
    </location>
</feature>
<feature type="region of interest" description="Complementarity-determining-3" evidence="2">
    <location>
        <begin position="116"/>
        <end position="117" status="greater than"/>
    </location>
</feature>
<feature type="modified residue" description="Pyrrolidone carboxylic acid" evidence="1">
    <location>
        <position position="20"/>
    </location>
</feature>
<feature type="disulfide bond" evidence="4">
    <location>
        <begin position="41"/>
        <end position="115"/>
    </location>
</feature>
<feature type="non-terminal residue">
    <location>
        <position position="117"/>
    </location>
</feature>
<comment type="function">
    <text evidence="6 7 8 9">V region of the variable domain of immunoglobulin heavy chains that participates in the antigen recognition (PubMed:24600447). Immunoglobulins, also known as antibodies, are membrane-bound or secreted glycoproteins produced by B lymphocytes. In the recognition phase of humoral immunity, the membrane-bound immunoglobulins serve as receptors which, upon binding of a specific antigen, trigger the clonal expansion and differentiation of B lymphocytes into immunoglobulins-secreting plasma cells. Secreted immunoglobulins mediate the effector phase of humoral immunity, which results in the elimination of bound antigens (PubMed:20176268, PubMed:22158414). The antigen binding site is formed by the variable domain of one heavy chain, together with that of its associated light chain. Thus, each immunoglobulin has two antigen binding sites with remarkable affinity for a particular antigen. The variable domains are assembled by a process called V-(D)-J rearrangement and can then be subjected to somatic hypermutations which, after exposure to antigen and selection, allow affinity maturation for a particular antigen (PubMed:17576170, PubMed:20176268).</text>
</comment>
<comment type="subunit">
    <text evidence="7">Immunoglobulins are composed of two identical heavy chains and two identical light chains; disulfide-linked.</text>
</comment>
<comment type="subcellular location">
    <subcellularLocation>
        <location evidence="7 8">Secreted</location>
    </subcellularLocation>
    <subcellularLocation>
        <location evidence="7 8">Cell membrane</location>
    </subcellularLocation>
</comment>
<comment type="polymorphism">
    <text evidence="11">There are several alleles. The sequence shown is that of IMGT allele IGHV3-30-5*01.</text>
</comment>
<comment type="caution">
    <text evidence="11">For examples of full-length immunoglobulin heavy chains (of different isotypes) see AC P0DOX2, AC P0DOX3, AC P0DOX4, AC P0DOX5 and AC P0DOX6.</text>
</comment>
<comment type="caution">
    <text evidence="12">Product of a polymorphic gene. This sequence cannot be differentiated from this of the IGHV3-30 gene. Watson et al. identified this gene on chromosome 14. However, it is not currently present on the reference genome assembly (GRCh38/hg38).</text>
</comment>
<name>HVC05_HUMAN</name>
<organism>
    <name type="scientific">Homo sapiens</name>
    <name type="common">Human</name>
    <dbReference type="NCBI Taxonomy" id="9606"/>
    <lineage>
        <taxon>Eukaryota</taxon>
        <taxon>Metazoa</taxon>
        <taxon>Chordata</taxon>
        <taxon>Craniata</taxon>
        <taxon>Vertebrata</taxon>
        <taxon>Euteleostomi</taxon>
        <taxon>Mammalia</taxon>
        <taxon>Eutheria</taxon>
        <taxon>Euarchontoglires</taxon>
        <taxon>Primates</taxon>
        <taxon>Haplorrhini</taxon>
        <taxon>Catarrhini</taxon>
        <taxon>Hominidae</taxon>
        <taxon>Homo</taxon>
    </lineage>
</organism>
<gene>
    <name evidence="5 10" type="primary">IGHV3-30-5</name>
</gene>
<sequence length="117" mass="12947">MEFGLSWVFLVALLRGVQCQVQLVESGGGVVQPGRSLRLSCAASGFTFSSYGMHWVRQAPGKGLEWVAVISYDGSNKYYADSVKGRFTISRDNSKNTLYLQMNSLRAEDTAVYYCAK</sequence>
<keyword id="KW-1064">Adaptive immunity</keyword>
<keyword id="KW-1003">Cell membrane</keyword>
<keyword id="KW-1015">Disulfide bond</keyword>
<keyword id="KW-0391">Immunity</keyword>
<keyword id="KW-1280">Immunoglobulin</keyword>
<keyword id="KW-0393">Immunoglobulin domain</keyword>
<keyword id="KW-0472">Membrane</keyword>
<keyword id="KW-0873">Pyrrolidone carboxylic acid</keyword>
<keyword id="KW-1185">Reference proteome</keyword>
<keyword id="KW-0964">Secreted</keyword>
<keyword id="KW-0732">Signal</keyword>